<organism>
    <name type="scientific">Bacillus anthracis (strain CDC 684 / NRRL 3495)</name>
    <dbReference type="NCBI Taxonomy" id="568206"/>
    <lineage>
        <taxon>Bacteria</taxon>
        <taxon>Bacillati</taxon>
        <taxon>Bacillota</taxon>
        <taxon>Bacilli</taxon>
        <taxon>Bacillales</taxon>
        <taxon>Bacillaceae</taxon>
        <taxon>Bacillus</taxon>
        <taxon>Bacillus cereus group</taxon>
    </lineage>
</organism>
<accession>C3L743</accession>
<keyword id="KW-0210">Decarboxylase</keyword>
<keyword id="KW-0456">Lyase</keyword>
<keyword id="KW-0665">Pyrimidine biosynthesis</keyword>
<comment type="function">
    <text evidence="1">Catalyzes the decarboxylation of orotidine 5'-monophosphate (OMP) to uridine 5'-monophosphate (UMP).</text>
</comment>
<comment type="catalytic activity">
    <reaction evidence="1">
        <text>orotidine 5'-phosphate + H(+) = UMP + CO2</text>
        <dbReference type="Rhea" id="RHEA:11596"/>
        <dbReference type="ChEBI" id="CHEBI:15378"/>
        <dbReference type="ChEBI" id="CHEBI:16526"/>
        <dbReference type="ChEBI" id="CHEBI:57538"/>
        <dbReference type="ChEBI" id="CHEBI:57865"/>
        <dbReference type="EC" id="4.1.1.23"/>
    </reaction>
</comment>
<comment type="pathway">
    <text evidence="1">Pyrimidine metabolism; UMP biosynthesis via de novo pathway; UMP from orotate: step 2/2.</text>
</comment>
<comment type="subunit">
    <text evidence="1">Homodimer.</text>
</comment>
<comment type="similarity">
    <text evidence="1">Belongs to the OMP decarboxylase family. Type 1 subfamily.</text>
</comment>
<evidence type="ECO:0000255" key="1">
    <source>
        <dbReference type="HAMAP-Rule" id="MF_01200"/>
    </source>
</evidence>
<protein>
    <recommendedName>
        <fullName evidence="1">Orotidine 5'-phosphate decarboxylase</fullName>
        <ecNumber evidence="1">4.1.1.23</ecNumber>
    </recommendedName>
    <alternativeName>
        <fullName evidence="1">OMP decarboxylase</fullName>
        <shortName evidence="1">OMPDCase</shortName>
        <shortName evidence="1">OMPdecase</shortName>
    </alternativeName>
</protein>
<dbReference type="EC" id="4.1.1.23" evidence="1"/>
<dbReference type="EMBL" id="CP001215">
    <property type="protein sequence ID" value="ACP16921.1"/>
    <property type="molecule type" value="Genomic_DNA"/>
</dbReference>
<dbReference type="RefSeq" id="WP_000083503.1">
    <property type="nucleotide sequence ID" value="NC_012581.1"/>
</dbReference>
<dbReference type="SMR" id="C3L743"/>
<dbReference type="GeneID" id="45023712"/>
<dbReference type="KEGG" id="bah:BAMEG_0609"/>
<dbReference type="HOGENOM" id="CLU_067069_1_1_9"/>
<dbReference type="UniPathway" id="UPA00070">
    <property type="reaction ID" value="UER00120"/>
</dbReference>
<dbReference type="GO" id="GO:0005829">
    <property type="term" value="C:cytosol"/>
    <property type="evidence" value="ECO:0007669"/>
    <property type="project" value="TreeGrafter"/>
</dbReference>
<dbReference type="GO" id="GO:0004590">
    <property type="term" value="F:orotidine-5'-phosphate decarboxylase activity"/>
    <property type="evidence" value="ECO:0007669"/>
    <property type="project" value="UniProtKB-UniRule"/>
</dbReference>
<dbReference type="GO" id="GO:0006207">
    <property type="term" value="P:'de novo' pyrimidine nucleobase biosynthetic process"/>
    <property type="evidence" value="ECO:0007669"/>
    <property type="project" value="InterPro"/>
</dbReference>
<dbReference type="GO" id="GO:0044205">
    <property type="term" value="P:'de novo' UMP biosynthetic process"/>
    <property type="evidence" value="ECO:0007669"/>
    <property type="project" value="UniProtKB-UniRule"/>
</dbReference>
<dbReference type="CDD" id="cd04725">
    <property type="entry name" value="OMP_decarboxylase_like"/>
    <property type="match status" value="1"/>
</dbReference>
<dbReference type="FunFam" id="3.20.20.70:FF:000015">
    <property type="entry name" value="Orotidine 5'-phosphate decarboxylase"/>
    <property type="match status" value="1"/>
</dbReference>
<dbReference type="Gene3D" id="3.20.20.70">
    <property type="entry name" value="Aldolase class I"/>
    <property type="match status" value="1"/>
</dbReference>
<dbReference type="HAMAP" id="MF_01200_B">
    <property type="entry name" value="OMPdecase_type1_B"/>
    <property type="match status" value="1"/>
</dbReference>
<dbReference type="InterPro" id="IPR013785">
    <property type="entry name" value="Aldolase_TIM"/>
</dbReference>
<dbReference type="InterPro" id="IPR014732">
    <property type="entry name" value="OMPdecase"/>
</dbReference>
<dbReference type="InterPro" id="IPR018089">
    <property type="entry name" value="OMPdecase_AS"/>
</dbReference>
<dbReference type="InterPro" id="IPR047596">
    <property type="entry name" value="OMPdecase_bac"/>
</dbReference>
<dbReference type="InterPro" id="IPR001754">
    <property type="entry name" value="OMPdeCOase_dom"/>
</dbReference>
<dbReference type="InterPro" id="IPR011060">
    <property type="entry name" value="RibuloseP-bd_barrel"/>
</dbReference>
<dbReference type="NCBIfam" id="NF001273">
    <property type="entry name" value="PRK00230.1"/>
    <property type="match status" value="1"/>
</dbReference>
<dbReference type="NCBIfam" id="TIGR01740">
    <property type="entry name" value="pyrF"/>
    <property type="match status" value="1"/>
</dbReference>
<dbReference type="PANTHER" id="PTHR32119">
    <property type="entry name" value="OROTIDINE 5'-PHOSPHATE DECARBOXYLASE"/>
    <property type="match status" value="1"/>
</dbReference>
<dbReference type="PANTHER" id="PTHR32119:SF2">
    <property type="entry name" value="OROTIDINE 5'-PHOSPHATE DECARBOXYLASE"/>
    <property type="match status" value="1"/>
</dbReference>
<dbReference type="Pfam" id="PF00215">
    <property type="entry name" value="OMPdecase"/>
    <property type="match status" value="1"/>
</dbReference>
<dbReference type="SMART" id="SM00934">
    <property type="entry name" value="OMPdecase"/>
    <property type="match status" value="1"/>
</dbReference>
<dbReference type="SUPFAM" id="SSF51366">
    <property type="entry name" value="Ribulose-phoshate binding barrel"/>
    <property type="match status" value="1"/>
</dbReference>
<dbReference type="PROSITE" id="PS00156">
    <property type="entry name" value="OMPDECASE"/>
    <property type="match status" value="1"/>
</dbReference>
<reference key="1">
    <citation type="submission" date="2008-10" db="EMBL/GenBank/DDBJ databases">
        <title>Genome sequence of Bacillus anthracis str. CDC 684.</title>
        <authorList>
            <person name="Dodson R.J."/>
            <person name="Munk A.C."/>
            <person name="Brettin T."/>
            <person name="Bruce D."/>
            <person name="Detter C."/>
            <person name="Tapia R."/>
            <person name="Han C."/>
            <person name="Sutton G."/>
            <person name="Sims D."/>
        </authorList>
    </citation>
    <scope>NUCLEOTIDE SEQUENCE [LARGE SCALE GENOMIC DNA]</scope>
    <source>
        <strain>CDC 684 / NRRL 3495</strain>
    </source>
</reference>
<proteinExistence type="inferred from homology"/>
<gene>
    <name evidence="1" type="primary">pyrF</name>
    <name type="ordered locus">BAMEG_0609</name>
</gene>
<name>PYRF_BACAC</name>
<feature type="chain" id="PRO_1000164558" description="Orotidine 5'-phosphate decarboxylase">
    <location>
        <begin position="1"/>
        <end position="238"/>
    </location>
</feature>
<feature type="active site" description="Proton donor" evidence="1">
    <location>
        <position position="61"/>
    </location>
</feature>
<feature type="binding site" evidence="1">
    <location>
        <position position="10"/>
    </location>
    <ligand>
        <name>substrate</name>
    </ligand>
</feature>
<feature type="binding site" evidence="1">
    <location>
        <position position="32"/>
    </location>
    <ligand>
        <name>substrate</name>
    </ligand>
</feature>
<feature type="binding site" evidence="1">
    <location>
        <begin position="59"/>
        <end position="68"/>
    </location>
    <ligand>
        <name>substrate</name>
    </ligand>
</feature>
<feature type="binding site" evidence="1">
    <location>
        <position position="122"/>
    </location>
    <ligand>
        <name>substrate</name>
    </ligand>
</feature>
<feature type="binding site" evidence="1">
    <location>
        <position position="184"/>
    </location>
    <ligand>
        <name>substrate</name>
    </ligand>
</feature>
<feature type="binding site" evidence="1">
    <location>
        <position position="193"/>
    </location>
    <ligand>
        <name>substrate</name>
    </ligand>
</feature>
<feature type="binding site" evidence="1">
    <location>
        <position position="213"/>
    </location>
    <ligand>
        <name>substrate</name>
    </ligand>
</feature>
<feature type="binding site" evidence="1">
    <location>
        <position position="214"/>
    </location>
    <ligand>
        <name>substrate</name>
    </ligand>
</feature>
<sequence length="238" mass="26187">MSQSLIVALDFPGKQDVEQFLRHFEGEELFVKVGMELFYKEGPAIITYLKEKGHKIFLDLKLHDIPNTVKSAMRSLASLDVDMVNVHAGGGSSMMKAAIEGLEEGKQEGKERPICIAVTQLTSTSETMMKKEIGIEKTLEEAVAHYAKLTKESGLDGVVCSTLEVPKLREVCGSEFVTVTPGIRLASDDVNDQVRVATPKRARELGSSYIVVGRSITKAENPLEAYKTVKQQWEGVTV</sequence>